<protein>
    <recommendedName>
        <fullName>Dermonecrotic toxin LarSicTox-alphaIB2a</fullName>
        <ecNumber evidence="5">4.6.1.-</ecNumber>
    </recommendedName>
    <alternativeName>
        <fullName>Phospholipase D</fullName>
        <shortName>PLD</shortName>
    </alternativeName>
    <alternativeName>
        <fullName>Sphingomyelin phosphodiesterase D 1</fullName>
        <shortName>SMD 1</shortName>
        <shortName>SMase D 1</shortName>
        <shortName>Sphingomyelinase D 1</shortName>
    </alternativeName>
</protein>
<dbReference type="EC" id="4.6.1.-" evidence="5"/>
<dbReference type="EMBL" id="AF512953">
    <property type="protein sequence ID" value="AAP44735.2"/>
    <property type="molecule type" value="mRNA"/>
</dbReference>
<dbReference type="EMBL" id="AF512954">
    <property type="protein sequence ID" value="AAP46535.1"/>
    <property type="molecule type" value="Genomic_DNA"/>
</dbReference>
<dbReference type="EMBL" id="AF512955">
    <property type="protein sequence ID" value="AAP46536.1"/>
    <property type="molecule type" value="Genomic_DNA"/>
</dbReference>
<dbReference type="SMR" id="Q7Z1Y7"/>
<dbReference type="ArachnoServer" id="AS000128">
    <property type="toxin name" value="Sphingomyelinase D (LaSicTox-alphaIB2a)"/>
</dbReference>
<dbReference type="BRENDA" id="3.1.4.41">
    <property type="organism ID" value="8289"/>
</dbReference>
<dbReference type="GO" id="GO:0005576">
    <property type="term" value="C:extracellular region"/>
    <property type="evidence" value="ECO:0007669"/>
    <property type="project" value="UniProtKB-SubCell"/>
</dbReference>
<dbReference type="GO" id="GO:0016829">
    <property type="term" value="F:lyase activity"/>
    <property type="evidence" value="ECO:0007669"/>
    <property type="project" value="UniProtKB-KW"/>
</dbReference>
<dbReference type="GO" id="GO:0046872">
    <property type="term" value="F:metal ion binding"/>
    <property type="evidence" value="ECO:0007669"/>
    <property type="project" value="UniProtKB-KW"/>
</dbReference>
<dbReference type="GO" id="GO:0008081">
    <property type="term" value="F:phosphoric diester hydrolase activity"/>
    <property type="evidence" value="ECO:0007669"/>
    <property type="project" value="InterPro"/>
</dbReference>
<dbReference type="GO" id="GO:0090729">
    <property type="term" value="F:toxin activity"/>
    <property type="evidence" value="ECO:0007669"/>
    <property type="project" value="UniProtKB-KW"/>
</dbReference>
<dbReference type="GO" id="GO:0031640">
    <property type="term" value="P:killing of cells of another organism"/>
    <property type="evidence" value="ECO:0007669"/>
    <property type="project" value="UniProtKB-KW"/>
</dbReference>
<dbReference type="GO" id="GO:0016042">
    <property type="term" value="P:lipid catabolic process"/>
    <property type="evidence" value="ECO:0007669"/>
    <property type="project" value="UniProtKB-KW"/>
</dbReference>
<dbReference type="CDD" id="cd08576">
    <property type="entry name" value="GDPD_like_SMaseD_PLD"/>
    <property type="match status" value="1"/>
</dbReference>
<dbReference type="Gene3D" id="3.20.20.190">
    <property type="entry name" value="Phosphatidylinositol (PI) phosphodiesterase"/>
    <property type="match status" value="1"/>
</dbReference>
<dbReference type="InterPro" id="IPR017946">
    <property type="entry name" value="PLC-like_Pdiesterase_TIM-brl"/>
</dbReference>
<dbReference type="SUPFAM" id="SSF51695">
    <property type="entry name" value="PLC-like phosphodiesterases"/>
    <property type="match status" value="1"/>
</dbReference>
<reference key="1">
    <citation type="journal article" date="2005" name="Toxicon">
        <title>Sphingomyelinase D from venoms of Loxosceles spiders: evolutionary insights from cDNA sequences and gene structure.</title>
        <authorList>
            <person name="Binford G.J."/>
            <person name="Cordes M.H.J."/>
            <person name="Wells M.A."/>
        </authorList>
    </citation>
    <scope>NUCLEOTIDE SEQUENCE [GENOMIC DNA] OF 1-117 AND 279-320</scope>
    <scope>NUCLEOTIDE SEQUENCE [MRNA] OF 55-320</scope>
    <source>
        <tissue>Venom gland</tissue>
    </source>
</reference>
<keyword id="KW-0204">Cytolysis</keyword>
<keyword id="KW-1061">Dermonecrotic toxin</keyword>
<keyword id="KW-1015">Disulfide bond</keyword>
<keyword id="KW-0325">Glycoprotein</keyword>
<keyword id="KW-0354">Hemolysis</keyword>
<keyword id="KW-0442">Lipid degradation</keyword>
<keyword id="KW-0443">Lipid metabolism</keyword>
<keyword id="KW-0456">Lyase</keyword>
<keyword id="KW-0460">Magnesium</keyword>
<keyword id="KW-0479">Metal-binding</keyword>
<keyword id="KW-0964">Secreted</keyword>
<keyword id="KW-0732">Signal</keyword>
<keyword id="KW-0800">Toxin</keyword>
<keyword id="KW-0865">Zymogen</keyword>
<organism>
    <name type="scientific">Loxosceles arizonica</name>
    <name type="common">Arizona brown spider</name>
    <dbReference type="NCBI Taxonomy" id="196454"/>
    <lineage>
        <taxon>Eukaryota</taxon>
        <taxon>Metazoa</taxon>
        <taxon>Ecdysozoa</taxon>
        <taxon>Arthropoda</taxon>
        <taxon>Chelicerata</taxon>
        <taxon>Arachnida</taxon>
        <taxon>Araneae</taxon>
        <taxon>Araneomorphae</taxon>
        <taxon>Haplogynae</taxon>
        <taxon>Scytodoidea</taxon>
        <taxon>Sicariidae</taxon>
        <taxon>Loxosceles</taxon>
    </lineage>
</organism>
<proteinExistence type="evidence at transcript level"/>
<evidence type="ECO:0000250" key="1"/>
<evidence type="ECO:0000250" key="2">
    <source>
        <dbReference type="UniProtKB" id="A0A0D4WTV1"/>
    </source>
</evidence>
<evidence type="ECO:0000250" key="3">
    <source>
        <dbReference type="UniProtKB" id="A0A0D4WV12"/>
    </source>
</evidence>
<evidence type="ECO:0000250" key="4">
    <source>
        <dbReference type="UniProtKB" id="P0CE80"/>
    </source>
</evidence>
<evidence type="ECO:0000250" key="5">
    <source>
        <dbReference type="UniProtKB" id="Q4ZFU2"/>
    </source>
</evidence>
<evidence type="ECO:0000250" key="6">
    <source>
        <dbReference type="UniProtKB" id="Q8I914"/>
    </source>
</evidence>
<evidence type="ECO:0000255" key="7"/>
<evidence type="ECO:0000305" key="8"/>
<evidence type="ECO:0000305" key="9">
    <source>
    </source>
</evidence>
<accession>Q7Z1Y7</accession>
<accession>Q7Z1N1</accession>
<accession>Q7Z1N2</accession>
<comment type="function">
    <text evidence="2 4">Dermonecrotic toxins cleave the phosphodiester linkage between the phosphate and headgroup of certain phospholipids (sphingolipid and lysolipid substrates), forming an alcohol (often choline) and a cyclic phosphate (By similarity). This toxin acts on sphingomyelin (SM) (By similarity). It may also act on ceramide phosphoethanolamine (CPE), lysophosphatidylcholine (LPC) and lysophosphatidylethanolamine (LPE), but not on lysophosphatidylserine (LPS), and lysophosphatidylglycerol (LPG) (By similarity). It acts by transphosphatidylation, releasing exclusively cyclic phosphate products as second products (By similarity). Induces dermonecrosis, hemolysis, increased vascular permeability, edema, inflammatory response, and platelet aggregation (By similarity).</text>
</comment>
<comment type="catalytic activity">
    <reaction evidence="2">
        <text>an N-(acyl)-sphingosylphosphocholine = an N-(acyl)-sphingosyl-1,3-cyclic phosphate + choline</text>
        <dbReference type="Rhea" id="RHEA:60652"/>
        <dbReference type="ChEBI" id="CHEBI:15354"/>
        <dbReference type="ChEBI" id="CHEBI:64583"/>
        <dbReference type="ChEBI" id="CHEBI:143892"/>
    </reaction>
</comment>
<comment type="catalytic activity">
    <reaction evidence="2">
        <text>an N-(acyl)-sphingosylphosphoethanolamine = an N-(acyl)-sphingosyl-1,3-cyclic phosphate + ethanolamine</text>
        <dbReference type="Rhea" id="RHEA:60648"/>
        <dbReference type="ChEBI" id="CHEBI:57603"/>
        <dbReference type="ChEBI" id="CHEBI:143891"/>
        <dbReference type="ChEBI" id="CHEBI:143892"/>
    </reaction>
</comment>
<comment type="catalytic activity">
    <reaction evidence="2">
        <text>a 1-acyl-sn-glycero-3-phosphocholine = a 1-acyl-sn-glycero-2,3-cyclic phosphate + choline</text>
        <dbReference type="Rhea" id="RHEA:60700"/>
        <dbReference type="ChEBI" id="CHEBI:15354"/>
        <dbReference type="ChEBI" id="CHEBI:58168"/>
        <dbReference type="ChEBI" id="CHEBI:143947"/>
    </reaction>
</comment>
<comment type="catalytic activity">
    <reaction evidence="2">
        <text>a 1-acyl-sn-glycero-3-phosphoethanolamine = a 1-acyl-sn-glycero-2,3-cyclic phosphate + ethanolamine</text>
        <dbReference type="Rhea" id="RHEA:60704"/>
        <dbReference type="ChEBI" id="CHEBI:57603"/>
        <dbReference type="ChEBI" id="CHEBI:64381"/>
        <dbReference type="ChEBI" id="CHEBI:143947"/>
    </reaction>
</comment>
<comment type="cofactor">
    <cofactor evidence="6">
        <name>Mg(2+)</name>
        <dbReference type="ChEBI" id="CHEBI:18420"/>
    </cofactor>
    <text evidence="6">Binds 1 Mg(2+) ion per subunit.</text>
</comment>
<comment type="subcellular location">
    <subcellularLocation>
        <location evidence="9">Secreted</location>
    </subcellularLocation>
</comment>
<comment type="tissue specificity">
    <text evidence="9">Expressed by the venom gland.</text>
</comment>
<comment type="similarity">
    <text evidence="8">Belongs to the arthropod phospholipase D family. Class II subfamily.</text>
</comment>
<comment type="caution">
    <text evidence="2 3 5">The most common activity assay for dermonecrotic toxins detects enzymatic activity by monitoring choline release from substrate. Liberation of choline from sphingomyelin (SM) or lysophosphatidylcholine (LPC) is commonly assumed to result from substrate hydrolysis, giving either ceramide-1-phosphate (C1P) or lysophosphatidic acid (LPA), respectively, as a second product. However, two studies from Lajoie and colleagues (2013 and 2015) report the observation of exclusive formation of cyclic phosphate products as second products, resulting from intramolecular transphosphatidylation. Cyclic phosphates have vastly different biological properties from their monoester counterparts, and they may be relevant to the pathology of brown spider envenomation.</text>
</comment>
<sequence length="320" mass="36153">MSHSSTALLHPYVAARATEKFAPIYFFCHPLQSAETDVAERANKRPIWIMGHMVNANYQIDEFVNLGANSIETDVSFDSSANPEYTYHGVPCDCRGWCKKWEYFNNFLKALRKATTPGDSKYHEKLVLVVFDLKTGSLYDNQAYDAGKKLAKNLLQHYWNNGNNGGRAYIVLSIPNLAHYKLITGFKETLKTEGHPELMEKVGYDFSGNDNIDQVANAYKKAGVTGHVWQSDGITNCLLRGLDRVRKAVANRDSSNGYINKVYYWTVDKRQSTKNALDAGVDGIMPNYPDVIADVPNESAYKAKFRIASYDDNPWETFKN</sequence>
<name>A1LA_LOXAR</name>
<feature type="signal peptide" evidence="7">
    <location>
        <begin position="1"/>
        <end position="15"/>
    </location>
</feature>
<feature type="propeptide" id="PRO_0000035577" evidence="1">
    <location>
        <begin position="16"/>
        <end position="41"/>
    </location>
</feature>
<feature type="chain" id="PRO_0000035578" description="Dermonecrotic toxin LarSicTox-alphaIB2a">
    <location>
        <begin position="42"/>
        <end position="320"/>
    </location>
</feature>
<feature type="active site" evidence="6">
    <location>
        <position position="52"/>
    </location>
</feature>
<feature type="active site" description="Nucleophile" evidence="6">
    <location>
        <position position="88"/>
    </location>
</feature>
<feature type="binding site" evidence="6">
    <location>
        <position position="72"/>
    </location>
    <ligand>
        <name>Mg(2+)</name>
        <dbReference type="ChEBI" id="CHEBI:18420"/>
    </ligand>
</feature>
<feature type="binding site" evidence="6">
    <location>
        <position position="74"/>
    </location>
    <ligand>
        <name>Mg(2+)</name>
        <dbReference type="ChEBI" id="CHEBI:18420"/>
    </ligand>
</feature>
<feature type="binding site" evidence="6">
    <location>
        <position position="132"/>
    </location>
    <ligand>
        <name>Mg(2+)</name>
        <dbReference type="ChEBI" id="CHEBI:18420"/>
    </ligand>
</feature>
<feature type="glycosylation site" description="N-linked (GlcNAc...) asparagine" evidence="7">
    <location>
        <position position="297"/>
    </location>
</feature>
<feature type="disulfide bond" evidence="4">
    <location>
        <begin position="92"/>
        <end position="98"/>
    </location>
</feature>
<feature type="disulfide bond" evidence="4">
    <location>
        <begin position="94"/>
        <end position="237"/>
    </location>
</feature>
<feature type="sequence conflict" description="In Ref. 1; AAP46535." evidence="8" ref="1">
    <original>G</original>
    <variation>R</variation>
    <location>
        <position position="96"/>
    </location>
</feature>
<feature type="sequence conflict" description="In Ref. 1; AAP46536." evidence="8" ref="1">
    <original>P</original>
    <variation>T</variation>
    <location>
        <position position="286"/>
    </location>
</feature>
<feature type="sequence conflict" description="In Ref. 1; AAP46536." evidence="8" ref="1">
    <original>P</original>
    <variation>L</variation>
    <location>
        <position position="296"/>
    </location>
</feature>